<reference key="1">
    <citation type="journal article" date="2006" name="Genome Biol.">
        <title>Genomic analysis reveals that Pseudomonas aeruginosa virulence is combinatorial.</title>
        <authorList>
            <person name="Lee D.G."/>
            <person name="Urbach J.M."/>
            <person name="Wu G."/>
            <person name="Liberati N.T."/>
            <person name="Feinbaum R.L."/>
            <person name="Miyata S."/>
            <person name="Diggins L.T."/>
            <person name="He J."/>
            <person name="Saucier M."/>
            <person name="Deziel E."/>
            <person name="Friedman L."/>
            <person name="Li L."/>
            <person name="Grills G."/>
            <person name="Montgomery K."/>
            <person name="Kucherlapati R."/>
            <person name="Rahme L.G."/>
            <person name="Ausubel F.M."/>
        </authorList>
    </citation>
    <scope>NUCLEOTIDE SEQUENCE [LARGE SCALE GENOMIC DNA]</scope>
    <source>
        <strain>UCBPP-PA14</strain>
    </source>
</reference>
<name>SDHD_PSEAB</name>
<keyword id="KW-0456">Lyase</keyword>
<keyword id="KW-0663">Pyridoxal phosphate</keyword>
<gene>
    <name evidence="1" type="primary">dsdA</name>
    <name type="ordered locus">PA14_20650</name>
</gene>
<organism>
    <name type="scientific">Pseudomonas aeruginosa (strain UCBPP-PA14)</name>
    <dbReference type="NCBI Taxonomy" id="208963"/>
    <lineage>
        <taxon>Bacteria</taxon>
        <taxon>Pseudomonadati</taxon>
        <taxon>Pseudomonadota</taxon>
        <taxon>Gammaproteobacteria</taxon>
        <taxon>Pseudomonadales</taxon>
        <taxon>Pseudomonadaceae</taxon>
        <taxon>Pseudomonas</taxon>
    </lineage>
</organism>
<comment type="catalytic activity">
    <reaction evidence="1">
        <text>D-serine = pyruvate + NH4(+)</text>
        <dbReference type="Rhea" id="RHEA:13977"/>
        <dbReference type="ChEBI" id="CHEBI:15361"/>
        <dbReference type="ChEBI" id="CHEBI:28938"/>
        <dbReference type="ChEBI" id="CHEBI:35247"/>
        <dbReference type="EC" id="4.3.1.18"/>
    </reaction>
</comment>
<comment type="cofactor">
    <cofactor evidence="1">
        <name>pyridoxal 5'-phosphate</name>
        <dbReference type="ChEBI" id="CHEBI:597326"/>
    </cofactor>
</comment>
<comment type="similarity">
    <text evidence="1">Belongs to the serine/threonine dehydratase family. DsdA subfamily.</text>
</comment>
<feature type="chain" id="PRO_0000291737" description="Probable D-serine dehydratase">
    <location>
        <begin position="1"/>
        <end position="448"/>
    </location>
</feature>
<feature type="modified residue" description="N6-(pyridoxal phosphate)lysine" evidence="1">
    <location>
        <position position="119"/>
    </location>
</feature>
<sequence length="448" mass="48198">MILGTPKADWLAEFPRLADLIALRPSEWFNPAIAPSAEALADVGLGAADVADASARLQRFAPLIARLFPETAASGGIIESDLVEVAAFHDALRQHYAAELPGRLWLKRDSHLPISGSIKARGGIYEVLAHAERLALEHGLIGLDDDYSRLAEADCRAFFARHRIAVGSTGNLGLSIGIIGAALGFQASVHMSADARQWKKDKLRAHGVTVVEYASDYSVAVEQGRREAAGDPYTHFVDDENSRDLFLGYAVAAERLRGQLDAAGIRVDSEHPLFVHLPCGVGGGPGGVAFGLKLAFGDAVHCLFAEPTHSPCMFLGVYTGRHEQVSVQDFGIDNRTAADGLAVGRPSGFVGRAMQRLLDGYYTVDDDELFRLLALLERSQGIRLEPSALAGAPGIARVTREPQGYRERMGLTSARLANATHLVWATGGGMVPETEMRAYLKRGRSLLD</sequence>
<accession>Q02QJ1</accession>
<proteinExistence type="inferred from homology"/>
<evidence type="ECO:0000255" key="1">
    <source>
        <dbReference type="HAMAP-Rule" id="MF_01030"/>
    </source>
</evidence>
<protein>
    <recommendedName>
        <fullName evidence="1">Probable D-serine dehydratase</fullName>
        <ecNumber evidence="1">4.3.1.18</ecNumber>
    </recommendedName>
    <alternativeName>
        <fullName evidence="1">D-serine deaminase</fullName>
        <shortName evidence="1">DSD</shortName>
    </alternativeName>
</protein>
<dbReference type="EC" id="4.3.1.18" evidence="1"/>
<dbReference type="EMBL" id="CP000438">
    <property type="protein sequence ID" value="ABJ12608.1"/>
    <property type="molecule type" value="Genomic_DNA"/>
</dbReference>
<dbReference type="RefSeq" id="WP_003138263.1">
    <property type="nucleotide sequence ID" value="NZ_CP034244.1"/>
</dbReference>
<dbReference type="SMR" id="Q02QJ1"/>
<dbReference type="KEGG" id="pau:PA14_20650"/>
<dbReference type="PseudoCAP" id="PA14_20650"/>
<dbReference type="HOGENOM" id="CLU_035707_0_0_6"/>
<dbReference type="BioCyc" id="PAER208963:G1G74-1704-MONOMER"/>
<dbReference type="Proteomes" id="UP000000653">
    <property type="component" value="Chromosome"/>
</dbReference>
<dbReference type="GO" id="GO:0008721">
    <property type="term" value="F:D-serine ammonia-lyase activity"/>
    <property type="evidence" value="ECO:0007669"/>
    <property type="project" value="UniProtKB-EC"/>
</dbReference>
<dbReference type="GO" id="GO:0016836">
    <property type="term" value="F:hydro-lyase activity"/>
    <property type="evidence" value="ECO:0007669"/>
    <property type="project" value="UniProtKB-UniRule"/>
</dbReference>
<dbReference type="GO" id="GO:0030170">
    <property type="term" value="F:pyridoxal phosphate binding"/>
    <property type="evidence" value="ECO:0007669"/>
    <property type="project" value="InterPro"/>
</dbReference>
<dbReference type="GO" id="GO:0036088">
    <property type="term" value="P:D-serine catabolic process"/>
    <property type="evidence" value="ECO:0007669"/>
    <property type="project" value="TreeGrafter"/>
</dbReference>
<dbReference type="GO" id="GO:0009097">
    <property type="term" value="P:isoleucine biosynthetic process"/>
    <property type="evidence" value="ECO:0007669"/>
    <property type="project" value="TreeGrafter"/>
</dbReference>
<dbReference type="Gene3D" id="3.40.50.1100">
    <property type="match status" value="2"/>
</dbReference>
<dbReference type="HAMAP" id="MF_01030">
    <property type="entry name" value="D_Ser_dehydrat"/>
    <property type="match status" value="1"/>
</dbReference>
<dbReference type="InterPro" id="IPR011780">
    <property type="entry name" value="D_Ser_am_lyase"/>
</dbReference>
<dbReference type="InterPro" id="IPR050147">
    <property type="entry name" value="Ser/Thr_Dehydratase"/>
</dbReference>
<dbReference type="InterPro" id="IPR000634">
    <property type="entry name" value="Ser/Thr_deHydtase_PyrdxlP-BS"/>
</dbReference>
<dbReference type="InterPro" id="IPR001926">
    <property type="entry name" value="TrpB-like_PALP"/>
</dbReference>
<dbReference type="InterPro" id="IPR036052">
    <property type="entry name" value="TrpB-like_PALP_sf"/>
</dbReference>
<dbReference type="NCBIfam" id="TIGR02035">
    <property type="entry name" value="D_Ser_am_lyase"/>
    <property type="match status" value="1"/>
</dbReference>
<dbReference type="NCBIfam" id="NF002823">
    <property type="entry name" value="PRK02991.1"/>
    <property type="match status" value="1"/>
</dbReference>
<dbReference type="PANTHER" id="PTHR48078:SF9">
    <property type="entry name" value="D-SERINE DEHYDRATASE"/>
    <property type="match status" value="1"/>
</dbReference>
<dbReference type="PANTHER" id="PTHR48078">
    <property type="entry name" value="THREONINE DEHYDRATASE, MITOCHONDRIAL-RELATED"/>
    <property type="match status" value="1"/>
</dbReference>
<dbReference type="Pfam" id="PF00291">
    <property type="entry name" value="PALP"/>
    <property type="match status" value="1"/>
</dbReference>
<dbReference type="SUPFAM" id="SSF53686">
    <property type="entry name" value="Tryptophan synthase beta subunit-like PLP-dependent enzymes"/>
    <property type="match status" value="1"/>
</dbReference>
<dbReference type="PROSITE" id="PS00165">
    <property type="entry name" value="DEHYDRATASE_SER_THR"/>
    <property type="match status" value="1"/>
</dbReference>